<proteinExistence type="evidence at protein level"/>
<dbReference type="EC" id="5.4.99.13" evidence="1 3"/>
<dbReference type="EC" id="3.6.5.-" evidence="1 3"/>
<dbReference type="EMBL" id="CP000352">
    <property type="protein sequence ID" value="ABF07096.1"/>
    <property type="molecule type" value="Genomic_DNA"/>
</dbReference>
<dbReference type="RefSeq" id="WP_011515115.1">
    <property type="nucleotide sequence ID" value="NC_007973.1"/>
</dbReference>
<dbReference type="PDB" id="4XC6">
    <property type="method" value="X-ray"/>
    <property type="resolution" value="3.35 A"/>
    <property type="chains" value="A/B=1-1093"/>
</dbReference>
<dbReference type="PDB" id="4XC7">
    <property type="method" value="X-ray"/>
    <property type="resolution" value="3.45 A"/>
    <property type="chains" value="A/B=1-1093"/>
</dbReference>
<dbReference type="PDB" id="4XC8">
    <property type="method" value="X-ray"/>
    <property type="resolution" value="3.25 A"/>
    <property type="chains" value="A/B=1-1093"/>
</dbReference>
<dbReference type="PDB" id="5CJT">
    <property type="method" value="X-ray"/>
    <property type="resolution" value="3.40 A"/>
    <property type="chains" value="A/B=1-1093"/>
</dbReference>
<dbReference type="PDB" id="5CJU">
    <property type="method" value="X-ray"/>
    <property type="resolution" value="3.50 A"/>
    <property type="chains" value="A/B=1-1093"/>
</dbReference>
<dbReference type="PDB" id="5CJV">
    <property type="method" value="X-ray"/>
    <property type="resolution" value="3.45 A"/>
    <property type="chains" value="A/B=1-1093"/>
</dbReference>
<dbReference type="PDB" id="5CJW">
    <property type="method" value="X-ray"/>
    <property type="resolution" value="3.40 A"/>
    <property type="chains" value="A/B=1-1093"/>
</dbReference>
<dbReference type="PDB" id="8SSL">
    <property type="method" value="EM"/>
    <property type="resolution" value="4.60 A"/>
    <property type="chains" value="A/B/C=1-1093"/>
</dbReference>
<dbReference type="PDB" id="8STA">
    <property type="method" value="EM"/>
    <property type="resolution" value="7.30 A"/>
    <property type="chains" value="A/B/C/D=1-1093"/>
</dbReference>
<dbReference type="PDBsum" id="4XC6"/>
<dbReference type="PDBsum" id="4XC7"/>
<dbReference type="PDBsum" id="4XC8"/>
<dbReference type="PDBsum" id="5CJT"/>
<dbReference type="PDBsum" id="5CJU"/>
<dbReference type="PDBsum" id="5CJV"/>
<dbReference type="PDBsum" id="5CJW"/>
<dbReference type="PDBsum" id="8SSL"/>
<dbReference type="PDBsum" id="8STA"/>
<dbReference type="EMDB" id="EMD-40751"/>
<dbReference type="EMDB" id="EMD-40758"/>
<dbReference type="SMR" id="Q1LRY0"/>
<dbReference type="STRING" id="266264.Rmet_0210"/>
<dbReference type="KEGG" id="rme:Rmet_0210"/>
<dbReference type="eggNOG" id="COG1703">
    <property type="taxonomic scope" value="Bacteria"/>
</dbReference>
<dbReference type="eggNOG" id="COG1884">
    <property type="taxonomic scope" value="Bacteria"/>
</dbReference>
<dbReference type="eggNOG" id="COG2185">
    <property type="taxonomic scope" value="Bacteria"/>
</dbReference>
<dbReference type="HOGENOM" id="CLU_009523_2_0_4"/>
<dbReference type="BRENDA" id="5.4.99.13">
    <property type="organism ID" value="5272"/>
</dbReference>
<dbReference type="SABIO-RK" id="Q1LRY0"/>
<dbReference type="EvolutionaryTrace" id="Q1LRY0"/>
<dbReference type="Proteomes" id="UP000002429">
    <property type="component" value="Chromosome"/>
</dbReference>
<dbReference type="GO" id="GO:0031419">
    <property type="term" value="F:cobalamin binding"/>
    <property type="evidence" value="ECO:0000314"/>
    <property type="project" value="UniProtKB"/>
</dbReference>
<dbReference type="GO" id="GO:0005525">
    <property type="term" value="F:GTP binding"/>
    <property type="evidence" value="ECO:0000314"/>
    <property type="project" value="UniProtKB"/>
</dbReference>
<dbReference type="GO" id="GO:0003924">
    <property type="term" value="F:GTPase activity"/>
    <property type="evidence" value="ECO:0000314"/>
    <property type="project" value="UniProtKB"/>
</dbReference>
<dbReference type="GO" id="GO:0047727">
    <property type="term" value="F:isobutyryl-CoA mutase activity"/>
    <property type="evidence" value="ECO:0000314"/>
    <property type="project" value="UniProtKB"/>
</dbReference>
<dbReference type="GO" id="GO:0000287">
    <property type="term" value="F:magnesium ion binding"/>
    <property type="evidence" value="ECO:0000314"/>
    <property type="project" value="UniProtKB"/>
</dbReference>
<dbReference type="GO" id="GO:0004494">
    <property type="term" value="F:methylmalonyl-CoA mutase activity"/>
    <property type="evidence" value="ECO:0007669"/>
    <property type="project" value="InterPro"/>
</dbReference>
<dbReference type="GO" id="GO:0034784">
    <property type="term" value="F:pivalyl-CoA mutase activity"/>
    <property type="evidence" value="ECO:0000314"/>
    <property type="project" value="UniProtKB"/>
</dbReference>
<dbReference type="GO" id="GO:0006637">
    <property type="term" value="P:acyl-CoA metabolic process"/>
    <property type="evidence" value="ECO:0000314"/>
    <property type="project" value="UniProtKB"/>
</dbReference>
<dbReference type="CDD" id="cd02071">
    <property type="entry name" value="MM_CoA_mut_B12_BD"/>
    <property type="match status" value="1"/>
</dbReference>
<dbReference type="CDD" id="cd03678">
    <property type="entry name" value="MM_CoA_mutase_1"/>
    <property type="match status" value="1"/>
</dbReference>
<dbReference type="CDD" id="cd03114">
    <property type="entry name" value="MMAA-like"/>
    <property type="match status" value="1"/>
</dbReference>
<dbReference type="FunFam" id="3.20.20.240:FF:000003">
    <property type="entry name" value="Fused isobutyryl-CoA mutase"/>
    <property type="match status" value="1"/>
</dbReference>
<dbReference type="FunFam" id="3.40.50.280:FF:000005">
    <property type="entry name" value="Fused isobutyryl-CoA mutase"/>
    <property type="match status" value="1"/>
</dbReference>
<dbReference type="FunFam" id="3.40.50.300:FF:001512">
    <property type="entry name" value="Fused isobutyryl-CoA mutase"/>
    <property type="match status" value="1"/>
</dbReference>
<dbReference type="Gene3D" id="3.40.50.280">
    <property type="entry name" value="Cobalamin-binding domain"/>
    <property type="match status" value="1"/>
</dbReference>
<dbReference type="Gene3D" id="3.20.20.240">
    <property type="entry name" value="Methylmalonyl-CoA mutase"/>
    <property type="match status" value="1"/>
</dbReference>
<dbReference type="Gene3D" id="3.40.50.300">
    <property type="entry name" value="P-loop containing nucleotide triphosphate hydrolases"/>
    <property type="match status" value="1"/>
</dbReference>
<dbReference type="HAMAP" id="MF_02050">
    <property type="entry name" value="IcmF"/>
    <property type="match status" value="1"/>
</dbReference>
<dbReference type="InterPro" id="IPR006159">
    <property type="entry name" value="Acid_CoA_mut_C"/>
</dbReference>
<dbReference type="InterPro" id="IPR016176">
    <property type="entry name" value="Cbl-dep_enz_cat"/>
</dbReference>
<dbReference type="InterPro" id="IPR006158">
    <property type="entry name" value="Cobalamin-bd"/>
</dbReference>
<dbReference type="InterPro" id="IPR036724">
    <property type="entry name" value="Cobalamin-bd_sf"/>
</dbReference>
<dbReference type="InterPro" id="IPR052040">
    <property type="entry name" value="GTPase/Isobutyryl-CoA_mutase"/>
</dbReference>
<dbReference type="InterPro" id="IPR033669">
    <property type="entry name" value="IcmF"/>
</dbReference>
<dbReference type="InterPro" id="IPR053439">
    <property type="entry name" value="IcmF/GTPase_domain"/>
</dbReference>
<dbReference type="InterPro" id="IPR006099">
    <property type="entry name" value="MeMalonylCoA_mutase_a/b_cat"/>
</dbReference>
<dbReference type="InterPro" id="IPR006098">
    <property type="entry name" value="MMCoA_mutase_a_cat"/>
</dbReference>
<dbReference type="InterPro" id="IPR027417">
    <property type="entry name" value="P-loop_NTPase"/>
</dbReference>
<dbReference type="NCBIfam" id="TIGR00640">
    <property type="entry name" value="acid_CoA_mut_C"/>
    <property type="match status" value="1"/>
</dbReference>
<dbReference type="NCBIfam" id="TIGR00641">
    <property type="entry name" value="acid_CoA_mut_N"/>
    <property type="match status" value="1"/>
</dbReference>
<dbReference type="NCBIfam" id="NF045497">
    <property type="entry name" value="IsobCoAmut_IcmF"/>
    <property type="match status" value="1"/>
</dbReference>
<dbReference type="PANTHER" id="PTHR43087:SF1">
    <property type="entry name" value="LAO_AO TRANSPORT SYSTEM ATPASE"/>
    <property type="match status" value="1"/>
</dbReference>
<dbReference type="PANTHER" id="PTHR43087">
    <property type="entry name" value="LYSINE/ARGININE/ORNITHINE TRANSPORT SYSTEM KINASE"/>
    <property type="match status" value="1"/>
</dbReference>
<dbReference type="Pfam" id="PF02310">
    <property type="entry name" value="B12-binding"/>
    <property type="match status" value="1"/>
</dbReference>
<dbReference type="Pfam" id="PF03308">
    <property type="entry name" value="MeaB"/>
    <property type="match status" value="1"/>
</dbReference>
<dbReference type="Pfam" id="PF01642">
    <property type="entry name" value="MM_CoA_mutase"/>
    <property type="match status" value="1"/>
</dbReference>
<dbReference type="SUPFAM" id="SSF52242">
    <property type="entry name" value="Cobalamin (vitamin B12)-binding domain"/>
    <property type="match status" value="1"/>
</dbReference>
<dbReference type="SUPFAM" id="SSF51703">
    <property type="entry name" value="Cobalamin (vitamin B12)-dependent enzymes"/>
    <property type="match status" value="1"/>
</dbReference>
<dbReference type="SUPFAM" id="SSF52540">
    <property type="entry name" value="P-loop containing nucleoside triphosphate hydrolases"/>
    <property type="match status" value="1"/>
</dbReference>
<dbReference type="PROSITE" id="PS51332">
    <property type="entry name" value="B12_BINDING"/>
    <property type="match status" value="1"/>
</dbReference>
<sequence length="1093" mass="120612">MTDLSDVSRTAAAKPPAVPGRGPANKVRFVTAASLFDGHDASINIMRRILQSQGCEVIHLGHNRSVQEVVTAALQEDVQGIAISSYQGGHVEYFKYMIDLLREHGGEHIQVFGGGGGVIVPDEIRELQAYGVARIYSPEDGQRMGLAGMITDMAQRCDIDLTRYAPTTLDTVVAGDRRALAQLITALENGKADPELVSALHAQAKAAAVPVLGITGTGGAGKSSLTDELIRRFRLDQDDALSIAVISIDPSRRKSGGALLGDRIRMNAINHPNIFMRSLATREAGSEISQALPDVIAACKAARFDLVIVETSGIGQGDAAIVPHVDLSLYVMTPEFGAASQLEKIDMLDFADFVAINKFDRKGAQDAWRDVAKQVQRNREQWHSRAEDMPVYGTQASRFNDDGVTMLYQGLVGALGARGMSLKPGTLPNLEGRISTGQNVIVPPARSRYLAELADTVRAYHRRVVAQSKLARERQQLRAAHDMLQGAGHESAALETLASERDVSLGAVERKLLAMWPQMQQAYSGDEYVVKIRDKEIRTGLISTTLSGTKIRKVVLPRFEDEGEILKWLMRENVPGSFPYTAGVFAFKREGEDPTRMFAGEGDAFRTNRRFKLVSEGMEAKRLSTAFDSVTLYGEDPHERPDIYGKVGNSGVSIATLEDMKVLYDGFDLTNPSTSVSMTINGPAPTILAMFMNTAIDQQIDRFRADNGRDPTADEEAKIRAWVLQNVRGTVQADILKEDQGQNTCIFSTEFSLKVMGDIQEYFVHHQVRNFYSVSISGYHIAEAGANPISQLAFTLANGFTYVEAYLARGMHIDDFAPNLSFFFSNGMDPEYSVLGRVARRIWAVTMRDKYGANDRSQKLKYHIQTSGRSLHAQEIDFNDIRTTLQALIAIYDNCNSLHTNAYDEAITTPTAESVRRALAIQLIINREWGVAKCENPNQGSFLIEELTDLVEEAVLQEFERIAERGGVLGAMETGYQRGKIQEESLYYEQLKHDGTLPIIGVNTFRNPNGDPTPQTLELARSSEDEKQSQLHRLTEFHGAHQADAEAMLARLRQAVIDNRNVFAVLMDAVRVCSLGQITHALFEVGGQYRRNM</sequence>
<feature type="chain" id="PRO_0000434125" description="Fused isobutyryl-CoA mutase">
    <location>
        <begin position="1"/>
        <end position="1093"/>
    </location>
</feature>
<feature type="domain" description="B12-binding" evidence="1 4">
    <location>
        <begin position="26"/>
        <end position="156"/>
    </location>
</feature>
<feature type="region of interest" description="Disordered" evidence="2">
    <location>
        <begin position="1"/>
        <end position="20"/>
    </location>
</feature>
<feature type="region of interest" description="GTPase chaperone MeaI" evidence="1 4">
    <location>
        <begin position="169"/>
        <end position="417"/>
    </location>
</feature>
<feature type="region of interest" description="Linker" evidence="1 4">
    <location>
        <begin position="418"/>
        <end position="579"/>
    </location>
</feature>
<feature type="binding site" description="axial binding residue" evidence="1 4 10">
    <location>
        <position position="39"/>
    </location>
    <ligand>
        <name>adenosylcob(III)alamin</name>
        <dbReference type="ChEBI" id="CHEBI:18408"/>
    </ligand>
    <ligandPart>
        <name>Co</name>
        <dbReference type="ChEBI" id="CHEBI:27638"/>
    </ligandPart>
</feature>
<feature type="binding site" evidence="1 4 10">
    <location>
        <begin position="219"/>
        <end position="224"/>
    </location>
    <ligand>
        <name>GTP</name>
        <dbReference type="ChEBI" id="CHEBI:37565"/>
    </ligand>
</feature>
<feature type="binding site" evidence="1 4 10">
    <location>
        <position position="223"/>
    </location>
    <ligand>
        <name>Mg(2+)</name>
        <dbReference type="ChEBI" id="CHEBI:18420"/>
        <label>1</label>
        <note>catalytic</note>
    </ligand>
</feature>
<feature type="binding site" evidence="1 4 10">
    <location>
        <position position="248"/>
    </location>
    <ligand>
        <name>Mg(2+)</name>
        <dbReference type="ChEBI" id="CHEBI:18420"/>
        <label>2</label>
    </ligand>
</feature>
<feature type="binding site" evidence="1 4 10">
    <location>
        <position position="249"/>
    </location>
    <ligand>
        <name>Mg(2+)</name>
        <dbReference type="ChEBI" id="CHEBI:18420"/>
        <label>2</label>
    </ligand>
</feature>
<feature type="binding site" evidence="1 4 10">
    <location>
        <position position="262"/>
    </location>
    <ligand>
        <name>Mg(2+)</name>
        <dbReference type="ChEBI" id="CHEBI:18420"/>
        <label>1</label>
        <note>catalytic</note>
    </ligand>
</feature>
<feature type="binding site" evidence="1 4 10">
    <location>
        <position position="262"/>
    </location>
    <ligand>
        <name>Mg(2+)</name>
        <dbReference type="ChEBI" id="CHEBI:18420"/>
        <label>2</label>
    </ligand>
</feature>
<feature type="binding site" evidence="1 4 10">
    <location>
        <position position="265"/>
    </location>
    <ligand>
        <name>GTP</name>
        <dbReference type="ChEBI" id="CHEBI:37565"/>
    </ligand>
</feature>
<feature type="binding site" evidence="1 4 10">
    <location>
        <position position="310"/>
    </location>
    <ligand>
        <name>Mg(2+)</name>
        <dbReference type="ChEBI" id="CHEBI:18420"/>
        <label>1</label>
        <note>catalytic</note>
    </ligand>
</feature>
<feature type="binding site" evidence="1 4 10">
    <location>
        <position position="310"/>
    </location>
    <ligand>
        <name>Mg(2+)</name>
        <dbReference type="ChEBI" id="CHEBI:18420"/>
        <label>2</label>
    </ligand>
</feature>
<feature type="binding site" evidence="1 4 10">
    <location>
        <position position="311"/>
    </location>
    <ligand>
        <name>Mg(2+)</name>
        <dbReference type="ChEBI" id="CHEBI:18420"/>
        <label>2</label>
    </ligand>
</feature>
<feature type="binding site" evidence="1 4 10">
    <location>
        <begin position="357"/>
        <end position="360"/>
    </location>
    <ligand>
        <name>GTP</name>
        <dbReference type="ChEBI" id="CHEBI:37565"/>
    </ligand>
</feature>
<feature type="binding site" evidence="1 4">
    <location>
        <position position="587"/>
    </location>
    <ligand>
        <name>substrate</name>
    </ligand>
</feature>
<feature type="binding site" evidence="1 4">
    <location>
        <position position="622"/>
    </location>
    <ligand>
        <name>substrate</name>
    </ligand>
</feature>
<feature type="binding site" evidence="1 4">
    <location>
        <position position="728"/>
    </location>
    <ligand>
        <name>substrate</name>
    </ligand>
</feature>
<feature type="binding site" evidence="1 4">
    <location>
        <position position="772"/>
    </location>
    <ligand>
        <name>substrate</name>
    </ligand>
</feature>
<feature type="binding site" evidence="1 4">
    <location>
        <position position="821"/>
    </location>
    <ligand>
        <name>substrate</name>
    </ligand>
</feature>
<feature type="binding site" evidence="1 4">
    <location>
        <position position="856"/>
    </location>
    <ligand>
        <name>substrate</name>
    </ligand>
</feature>
<feature type="binding site" evidence="1 4">
    <location>
        <position position="861"/>
    </location>
    <ligand>
        <name>substrate</name>
    </ligand>
</feature>
<feature type="binding site" evidence="1 4 10">
    <location>
        <position position="973"/>
    </location>
    <ligand>
        <name>GTP</name>
        <dbReference type="ChEBI" id="CHEBI:37565"/>
    </ligand>
</feature>
<feature type="binding site" evidence="1 4 10">
    <location>
        <position position="1092"/>
    </location>
    <ligand>
        <name>GTP</name>
        <dbReference type="ChEBI" id="CHEBI:37565"/>
    </ligand>
</feature>
<feature type="mutagenesis site" description="Switches the substrate specificity and enhances the catalytic efficiency of the isovaleryl-CoA mutase over the native isobutyryl-CoA mutase activity about 4000-fold. Is even more susceptible to inactivation than wild-type during turnover." evidence="5">
    <original>F</original>
    <variation>A</variation>
    <location>
        <position position="598"/>
    </location>
</feature>
<feature type="strand" evidence="13">
    <location>
        <begin position="28"/>
        <end position="33"/>
    </location>
</feature>
<feature type="turn" evidence="13">
    <location>
        <begin position="41"/>
        <end position="44"/>
    </location>
</feature>
<feature type="helix" evidence="13">
    <location>
        <begin position="45"/>
        <end position="53"/>
    </location>
</feature>
<feature type="strand" evidence="13">
    <location>
        <begin position="56"/>
        <end position="59"/>
    </location>
</feature>
<feature type="helix" evidence="13">
    <location>
        <begin position="66"/>
        <end position="76"/>
    </location>
</feature>
<feature type="strand" evidence="13">
    <location>
        <begin position="79"/>
        <end position="84"/>
    </location>
</feature>
<feature type="helix" evidence="13">
    <location>
        <begin position="90"/>
        <end position="103"/>
    </location>
</feature>
<feature type="strand" evidence="13">
    <location>
        <begin position="109"/>
        <end position="113"/>
    </location>
</feature>
<feature type="helix" evidence="13">
    <location>
        <begin position="121"/>
        <end position="130"/>
    </location>
</feature>
<feature type="strand" evidence="13">
    <location>
        <begin position="133"/>
        <end position="135"/>
    </location>
</feature>
<feature type="helix" evidence="13">
    <location>
        <begin position="138"/>
        <end position="144"/>
    </location>
</feature>
<feature type="helix" evidence="13">
    <location>
        <begin position="146"/>
        <end position="156"/>
    </location>
</feature>
<feature type="helix" evidence="11">
    <location>
        <begin position="161"/>
        <end position="164"/>
    </location>
</feature>
<feature type="helix" evidence="13">
    <location>
        <begin position="170"/>
        <end position="174"/>
    </location>
</feature>
<feature type="helix" evidence="13">
    <location>
        <begin position="177"/>
        <end position="189"/>
    </location>
</feature>
<feature type="helix" evidence="13">
    <location>
        <begin position="194"/>
        <end position="207"/>
    </location>
</feature>
<feature type="strand" evidence="13">
    <location>
        <begin position="211"/>
        <end position="217"/>
    </location>
</feature>
<feature type="helix" evidence="13">
    <location>
        <begin position="222"/>
        <end position="237"/>
    </location>
</feature>
<feature type="strand" evidence="13">
    <location>
        <begin position="243"/>
        <end position="249"/>
    </location>
</feature>
<feature type="turn" evidence="13">
    <location>
        <begin position="253"/>
        <end position="255"/>
    </location>
</feature>
<feature type="helix" evidence="13">
    <location>
        <begin position="263"/>
        <end position="265"/>
    </location>
</feature>
<feature type="strand" evidence="13">
    <location>
        <begin position="274"/>
        <end position="280"/>
    </location>
</feature>
<feature type="strand" evidence="13">
    <location>
        <begin position="283"/>
        <end position="285"/>
    </location>
</feature>
<feature type="helix" evidence="13">
    <location>
        <begin position="292"/>
        <end position="301"/>
    </location>
</feature>
<feature type="strand" evidence="13">
    <location>
        <begin position="305"/>
        <end position="313"/>
    </location>
</feature>
<feature type="helix" evidence="13">
    <location>
        <begin position="322"/>
        <end position="324"/>
    </location>
</feature>
<feature type="strand" evidence="13">
    <location>
        <begin position="326"/>
        <end position="332"/>
    </location>
</feature>
<feature type="helix" evidence="13">
    <location>
        <begin position="339"/>
        <end position="343"/>
    </location>
</feature>
<feature type="helix" evidence="13">
    <location>
        <begin position="346"/>
        <end position="349"/>
    </location>
</feature>
<feature type="strand" evidence="13">
    <location>
        <begin position="352"/>
        <end position="356"/>
    </location>
</feature>
<feature type="helix" evidence="13">
    <location>
        <begin position="364"/>
        <end position="378"/>
    </location>
</feature>
<feature type="helix" evidence="13">
    <location>
        <begin position="386"/>
        <end position="388"/>
    </location>
</feature>
<feature type="strand" evidence="13">
    <location>
        <begin position="389"/>
        <end position="393"/>
    </location>
</feature>
<feature type="helix" evidence="13">
    <location>
        <begin position="402"/>
        <end position="416"/>
    </location>
</feature>
<feature type="turn" evidence="13">
    <location>
        <begin position="417"/>
        <end position="419"/>
    </location>
</feature>
<feature type="helix" evidence="13">
    <location>
        <begin position="444"/>
        <end position="446"/>
    </location>
</feature>
<feature type="helix" evidence="13">
    <location>
        <begin position="449"/>
        <end position="485"/>
    </location>
</feature>
<feature type="helix" evidence="13">
    <location>
        <begin position="493"/>
        <end position="504"/>
    </location>
</feature>
<feature type="helix" evidence="13">
    <location>
        <begin position="507"/>
        <end position="522"/>
    </location>
</feature>
<feature type="strand" evidence="13">
    <location>
        <begin position="525"/>
        <end position="527"/>
    </location>
</feature>
<feature type="strand" evidence="11">
    <location>
        <begin position="538"/>
        <end position="540"/>
    </location>
</feature>
<feature type="strand" evidence="13">
    <location>
        <begin position="542"/>
        <end position="544"/>
    </location>
</feature>
<feature type="strand" evidence="12">
    <location>
        <begin position="546"/>
        <end position="548"/>
    </location>
</feature>
<feature type="strand" evidence="13">
    <location>
        <begin position="550"/>
        <end position="554"/>
    </location>
</feature>
<feature type="helix" evidence="13">
    <location>
        <begin position="562"/>
        <end position="571"/>
    </location>
</feature>
<feature type="strand" evidence="13">
    <location>
        <begin position="584"/>
        <end position="587"/>
    </location>
</feature>
<feature type="strand" evidence="13">
    <location>
        <begin position="597"/>
        <end position="599"/>
    </location>
</feature>
<feature type="helix" evidence="13">
    <location>
        <begin position="604"/>
        <end position="614"/>
    </location>
</feature>
<feature type="turn" evidence="11">
    <location>
        <begin position="615"/>
        <end position="617"/>
    </location>
</feature>
<feature type="strand" evidence="13">
    <location>
        <begin position="619"/>
        <end position="627"/>
    </location>
</feature>
<feature type="helix" evidence="13">
    <location>
        <begin position="629"/>
        <end position="632"/>
    </location>
</feature>
<feature type="helix" evidence="13">
    <location>
        <begin position="641"/>
        <end position="644"/>
    </location>
</feature>
<feature type="turn" evidence="13">
    <location>
        <begin position="645"/>
        <end position="650"/>
    </location>
</feature>
<feature type="strand" evidence="12">
    <location>
        <begin position="651"/>
        <end position="653"/>
    </location>
</feature>
<feature type="helix" evidence="13">
    <location>
        <begin position="657"/>
        <end position="663"/>
    </location>
</feature>
<feature type="turn" evidence="13">
    <location>
        <begin position="664"/>
        <end position="666"/>
    </location>
</feature>
<feature type="strand" evidence="13">
    <location>
        <begin position="674"/>
        <end position="679"/>
    </location>
</feature>
<feature type="helix" evidence="13">
    <location>
        <begin position="684"/>
        <end position="706"/>
    </location>
</feature>
<feature type="strand" evidence="13">
    <location>
        <begin position="707"/>
        <end position="709"/>
    </location>
</feature>
<feature type="helix" evidence="13">
    <location>
        <begin position="713"/>
        <end position="726"/>
    </location>
</feature>
<feature type="strand" evidence="13">
    <location>
        <begin position="729"/>
        <end position="731"/>
    </location>
</feature>
<feature type="helix" evidence="13">
    <location>
        <begin position="735"/>
        <end position="738"/>
    </location>
</feature>
<feature type="turn" evidence="13">
    <location>
        <begin position="739"/>
        <end position="742"/>
    </location>
</feature>
<feature type="helix" evidence="13">
    <location>
        <begin position="749"/>
        <end position="765"/>
    </location>
</feature>
<feature type="strand" evidence="13">
    <location>
        <begin position="770"/>
        <end position="777"/>
    </location>
</feature>
<feature type="helix" evidence="13">
    <location>
        <begin position="779"/>
        <end position="783"/>
    </location>
</feature>
<feature type="helix" evidence="13">
    <location>
        <begin position="788"/>
        <end position="809"/>
    </location>
</feature>
<feature type="helix" evidence="13">
    <location>
        <begin position="813"/>
        <end position="816"/>
    </location>
</feature>
<feature type="helix" evidence="13">
    <location>
        <begin position="817"/>
        <end position="819"/>
    </location>
</feature>
<feature type="strand" evidence="13">
    <location>
        <begin position="820"/>
        <end position="825"/>
    </location>
</feature>
<feature type="helix" evidence="13">
    <location>
        <begin position="830"/>
        <end position="834"/>
    </location>
</feature>
<feature type="helix" evidence="13">
    <location>
        <begin position="835"/>
        <end position="849"/>
    </location>
</feature>
<feature type="helix" evidence="13">
    <location>
        <begin position="855"/>
        <end position="858"/>
    </location>
</feature>
<feature type="strand" evidence="13">
    <location>
        <begin position="861"/>
        <end position="865"/>
    </location>
</feature>
<feature type="strand" evidence="13">
    <location>
        <begin position="873"/>
        <end position="875"/>
    </location>
</feature>
<feature type="helix" evidence="13">
    <location>
        <begin position="876"/>
        <end position="878"/>
    </location>
</feature>
<feature type="helix" evidence="13">
    <location>
        <begin position="879"/>
        <end position="892"/>
    </location>
</feature>
<feature type="strand" evidence="13">
    <location>
        <begin position="896"/>
        <end position="899"/>
    </location>
</feature>
<feature type="turn" evidence="13">
    <location>
        <begin position="903"/>
        <end position="907"/>
    </location>
</feature>
<feature type="helix" evidence="13">
    <location>
        <begin position="913"/>
        <end position="927"/>
    </location>
</feature>
<feature type="helix" evidence="13">
    <location>
        <begin position="931"/>
        <end position="933"/>
    </location>
</feature>
<feature type="turn" evidence="13">
    <location>
        <begin position="937"/>
        <end position="940"/>
    </location>
</feature>
<feature type="helix" evidence="13">
    <location>
        <begin position="942"/>
        <end position="963"/>
    </location>
</feature>
<feature type="turn" evidence="13">
    <location>
        <begin position="964"/>
        <end position="966"/>
    </location>
</feature>
<feature type="helix" evidence="13">
    <location>
        <begin position="967"/>
        <end position="974"/>
    </location>
</feature>
<feature type="helix" evidence="13">
    <location>
        <begin position="976"/>
        <end position="994"/>
    </location>
</feature>
<feature type="strand" evidence="13">
    <location>
        <begin position="995"/>
        <end position="997"/>
    </location>
</feature>
<feature type="turn" evidence="13">
    <location>
        <begin position="1000"/>
        <end position="1002"/>
    </location>
</feature>
<feature type="strand" evidence="13">
    <location>
        <begin position="1003"/>
        <end position="1005"/>
    </location>
</feature>
<feature type="helix" evidence="13">
    <location>
        <begin position="1024"/>
        <end position="1040"/>
    </location>
</feature>
<feature type="turn" evidence="13">
    <location>
        <begin position="1041"/>
        <end position="1043"/>
    </location>
</feature>
<feature type="helix" evidence="13">
    <location>
        <begin position="1044"/>
        <end position="1057"/>
    </location>
</feature>
<feature type="helix" evidence="13">
    <location>
        <begin position="1062"/>
        <end position="1069"/>
    </location>
</feature>
<feature type="turn" evidence="13">
    <location>
        <begin position="1070"/>
        <end position="1072"/>
    </location>
</feature>
<feature type="helix" evidence="13">
    <location>
        <begin position="1075"/>
        <end position="1086"/>
    </location>
</feature>
<evidence type="ECO:0000255" key="1">
    <source>
        <dbReference type="HAMAP-Rule" id="MF_02050"/>
    </source>
</evidence>
<evidence type="ECO:0000256" key="2">
    <source>
        <dbReference type="SAM" id="MobiDB-lite"/>
    </source>
</evidence>
<evidence type="ECO:0000269" key="3">
    <source>
    </source>
</evidence>
<evidence type="ECO:0000269" key="4">
    <source>
    </source>
</evidence>
<evidence type="ECO:0000269" key="5">
    <source>
    </source>
</evidence>
<evidence type="ECO:0000269" key="6">
    <source>
    </source>
</evidence>
<evidence type="ECO:0000303" key="7">
    <source>
    </source>
</evidence>
<evidence type="ECO:0000305" key="8"/>
<evidence type="ECO:0000312" key="9">
    <source>
        <dbReference type="EMBL" id="ABF07096.1"/>
    </source>
</evidence>
<evidence type="ECO:0007744" key="10">
    <source>
        <dbReference type="PDB" id="4XC6"/>
    </source>
</evidence>
<evidence type="ECO:0007829" key="11">
    <source>
        <dbReference type="PDB" id="4XC6"/>
    </source>
</evidence>
<evidence type="ECO:0007829" key="12">
    <source>
        <dbReference type="PDB" id="4XC7"/>
    </source>
</evidence>
<evidence type="ECO:0007829" key="13">
    <source>
        <dbReference type="PDB" id="4XC8"/>
    </source>
</evidence>
<name>ICMF_CUPMC</name>
<comment type="function">
    <text evidence="3 4 6">Catalyzes the reversible interconversion of isobutyryl-CoA and n-butyryl-CoA, and to a much lesser extent, of pivalyl-CoA and isovaleryl-CoA, using radical chemistry (PubMed:22167181). Also exhibits GTPase activity, associated with its G-protein domain (MeaI) that functions as a chaperone that assists cofactor delivery and proper holo-enzyme assembly (PubMed:22167181, PubMed:25675500). The G-domain of IcmF also has a role in its cofactor repair (PubMed:28130442). Does not display ATPase activity.</text>
</comment>
<comment type="catalytic activity">
    <reaction evidence="1 3">
        <text>2-methylpropanoyl-CoA = butanoyl-CoA</text>
        <dbReference type="Rhea" id="RHEA:13141"/>
        <dbReference type="ChEBI" id="CHEBI:57338"/>
        <dbReference type="ChEBI" id="CHEBI:57371"/>
        <dbReference type="EC" id="5.4.99.13"/>
    </reaction>
</comment>
<comment type="catalytic activity">
    <reaction evidence="3">
        <text>3-methylbutanoyl-CoA = 2,2-dimethylpropanoyl-CoA</text>
        <dbReference type="Rhea" id="RHEA:52620"/>
        <dbReference type="ChEBI" id="CHEBI:57345"/>
        <dbReference type="ChEBI" id="CHEBI:136712"/>
    </reaction>
</comment>
<comment type="catalytic activity">
    <reaction evidence="1 3">
        <text>GTP + H2O = GDP + phosphate + H(+)</text>
        <dbReference type="Rhea" id="RHEA:19669"/>
        <dbReference type="ChEBI" id="CHEBI:15377"/>
        <dbReference type="ChEBI" id="CHEBI:15378"/>
        <dbReference type="ChEBI" id="CHEBI:37565"/>
        <dbReference type="ChEBI" id="CHEBI:43474"/>
        <dbReference type="ChEBI" id="CHEBI:58189"/>
    </reaction>
</comment>
<comment type="cofactor">
    <cofactor evidence="1 4">
        <name>adenosylcob(III)alamin</name>
        <dbReference type="ChEBI" id="CHEBI:18408"/>
    </cofactor>
</comment>
<comment type="cofactor">
    <cofactor evidence="1 4">
        <name>Mg(2+)</name>
        <dbReference type="ChEBI" id="CHEBI:18420"/>
    </cofactor>
</comment>
<comment type="activity regulation">
    <text evidence="6">Is prone to inactivation during catalytic turnover due to the occasional loss of the 5'-deoxyadenosine moiety and formation of the inactive cob(II)alamin cofactor in its active site. The GTPase activity of IcmF powers the ejection of the inactive cofactor and requires the presence of an acceptor protein, adenosyltransferase (ATR), for receiving it. ATR, in turn, catalyzes an adenosylation reaction converting cob(II)alamin in the presence of ATP and a reductant to the active AdoCbl cofactor. The repaired cofactor is then reloaded onto IcmF in a GTPase-gated step, regenerating active enzyme. The GTPase activity of IcmF is significantly decreased in the presence of excess of AdoCbl or cob(II)alamin and is higher in the apoenzyme state, indicating that the G-domain senses the presence and identity of the cofactor in the mutase active site.</text>
</comment>
<comment type="biophysicochemical properties">
    <kinetics>
        <KM evidence="3">40 uM for GTP (at 37 degrees Celsius)</KM>
        <Vmax evidence="3">0.015 umol/min/mg enzyme for isovaleryl-CoA isomerization (at 37 degrees Celsius)</Vmax>
        <Vmax evidence="3">13.8 umol/min/mg enzyme for isobutyryl-CoA isomerization (at 37 degrees Celsius)</Vmax>
        <Vmax evidence="3">33.0 umol/min/mg enzyme for n-butyryl-CoA isomerization (at 37 degrees Celsius)</Vmax>
        <text evidence="3">kcat is 18 min(-1) for GTPase activity (at 37 degrees Celsius).</text>
    </kinetics>
</comment>
<comment type="subunit">
    <text evidence="1 4">Homodimer.</text>
</comment>
<comment type="domain">
    <text evidence="4">Is composed of four functional domains: the N-terminal 5'-deoxyadenosylcobalamin binding region that is homologous to the small subunit of ICM (IcmB), a middle P-loop GTPase domain (MeaI) that acts as a chaperone for ICM, a structured linker region involved in dimer formation, and a C-terminal part that is homologous to the large substrate-binding subunit of ICM (IcmA).</text>
</comment>
<comment type="miscellaneous">
    <text evidence="8">In many AdoCbl-dependent isomerases, e.g. methylmalonyl-CoA mutase (MCM), its G-protein chaperone is a separate protein.</text>
</comment>
<comment type="similarity">
    <text evidence="1 8">Belongs to the IcmF family.</text>
</comment>
<gene>
    <name evidence="1 7" type="primary">icmF</name>
    <name evidence="9" type="synonym">sbm</name>
    <name evidence="9" type="ordered locus">Rmet_0210</name>
</gene>
<reference key="1">
    <citation type="journal article" date="2010" name="PLoS ONE">
        <title>The complete genome sequence of Cupriavidus metallidurans strain CH34, a master survivalist in harsh and anthropogenic environments.</title>
        <authorList>
            <person name="Janssen P.J."/>
            <person name="Van Houdt R."/>
            <person name="Moors H."/>
            <person name="Monsieurs P."/>
            <person name="Morin N."/>
            <person name="Michaux A."/>
            <person name="Benotmane M.A."/>
            <person name="Leys N."/>
            <person name="Vallaeys T."/>
            <person name="Lapidus A."/>
            <person name="Monchy S."/>
            <person name="Medigue C."/>
            <person name="Taghavi S."/>
            <person name="McCorkle S."/>
            <person name="Dunn J."/>
            <person name="van der Lelie D."/>
            <person name="Mergeay M."/>
        </authorList>
    </citation>
    <scope>NUCLEOTIDE SEQUENCE [LARGE SCALE GENOMIC DNA]</scope>
    <source>
        <strain>ATCC 43123 / DSM 2839 / NBRC 102507 / CH34</strain>
    </source>
</reference>
<reference key="2">
    <citation type="journal article" date="2012" name="J. Biol. Chem.">
        <title>Novel coenzyme B12-dependent interconversion of isovaleryl-CoA and pivalyl-CoA.</title>
        <authorList>
            <person name="Cracan V."/>
            <person name="Banerjee R."/>
        </authorList>
    </citation>
    <scope>FUNCTION</scope>
    <scope>CATALYTIC ACTIVITY</scope>
    <scope>BIOPHYSICOCHEMICAL PROPERTIES</scope>
</reference>
<reference key="3">
    <citation type="journal article" date="2015" name="J. Biol. Chem.">
        <title>Engineered and native coenzyme B12-dependent isovaleryl-CoA/pivalyl-CoA mutase.</title>
        <authorList>
            <person name="Kitanishi K."/>
            <person name="Cracan V."/>
            <person name="Banerjee R."/>
        </authorList>
    </citation>
    <scope>MUTAGENESIS OF PHE-598</scope>
</reference>
<reference key="4">
    <citation type="journal article" date="2017" name="J. Biol. Chem.">
        <title>Cofactor editing by the G-protein metallochaperone domain regulates the radical B12 enzyme IcmF.</title>
        <authorList>
            <person name="Li Z."/>
            <person name="Kitanishi K."/>
            <person name="Twahir U.T."/>
            <person name="Cracan V."/>
            <person name="Chapman D."/>
            <person name="Warncke K."/>
            <person name="Banerjee R."/>
        </authorList>
    </citation>
    <scope>FUNCTION</scope>
    <scope>ACTIVITY REGULATION</scope>
</reference>
<reference key="5">
    <citation type="journal article" date="2015" name="Proc. Natl. Acad. Sci. U.S.A.">
        <title>Visualization of a radical B12 enzyme with its G-protein chaperone.</title>
        <authorList>
            <person name="Jost M."/>
            <person name="Cracan V."/>
            <person name="Hubbard P.A."/>
            <person name="Banerjee R."/>
            <person name="Drennan C.L."/>
        </authorList>
    </citation>
    <scope>X-RAY CRYSTALLOGRAPHY (3.25 ANGSTROMS) OF APOENZYME AND IN COMPLEXES WITH ADENOSYLCOBALAMIN; BUTYRYL-COA; GDP AND MAGNESIUM</scope>
    <scope>FUNCTION</scope>
    <scope>COFACTOR</scope>
    <scope>SUBUNIT</scope>
    <scope>DOMAIN</scope>
</reference>
<organism>
    <name type="scientific">Cupriavidus metallidurans (strain ATCC 43123 / DSM 2839 / NBRC 102507 / CH34)</name>
    <name type="common">Ralstonia metallidurans</name>
    <dbReference type="NCBI Taxonomy" id="266264"/>
    <lineage>
        <taxon>Bacteria</taxon>
        <taxon>Pseudomonadati</taxon>
        <taxon>Pseudomonadota</taxon>
        <taxon>Betaproteobacteria</taxon>
        <taxon>Burkholderiales</taxon>
        <taxon>Burkholderiaceae</taxon>
        <taxon>Cupriavidus</taxon>
    </lineage>
</organism>
<accession>Q1LRY0</accession>
<protein>
    <recommendedName>
        <fullName evidence="1 7">Fused isobutyryl-CoA mutase</fullName>
    </recommendedName>
    <domain>
        <recommendedName>
            <fullName evidence="1 7">Isobutyryl-CoA mutase</fullName>
            <shortName evidence="1 7">ICM</shortName>
            <ecNumber evidence="1 3">5.4.99.13</ecNumber>
        </recommendedName>
    </domain>
    <domain>
        <recommendedName>
            <fullName evidence="1 7">P-loop GTPase</fullName>
            <ecNumber evidence="1 3">3.6.5.-</ecNumber>
        </recommendedName>
        <alternativeName>
            <fullName evidence="1 7">G-protein chaperone</fullName>
        </alternativeName>
    </domain>
</protein>
<keyword id="KW-0002">3D-structure</keyword>
<keyword id="KW-0143">Chaperone</keyword>
<keyword id="KW-0846">Cobalamin</keyword>
<keyword id="KW-0170">Cobalt</keyword>
<keyword id="KW-0342">GTP-binding</keyword>
<keyword id="KW-0378">Hydrolase</keyword>
<keyword id="KW-0413">Isomerase</keyword>
<keyword id="KW-0460">Magnesium</keyword>
<keyword id="KW-0479">Metal-binding</keyword>
<keyword id="KW-0511">Multifunctional enzyme</keyword>
<keyword id="KW-0547">Nucleotide-binding</keyword>
<keyword id="KW-1185">Reference proteome</keyword>